<keyword id="KW-0472">Membrane</keyword>
<keyword id="KW-0597">Phosphoprotein</keyword>
<keyword id="KW-1185">Reference proteome</keyword>
<keyword id="KW-0812">Transmembrane</keyword>
<keyword id="KW-1133">Transmembrane helix</keyword>
<keyword id="KW-0813">Transport</keyword>
<gene>
    <name type="primary">Slc35f5</name>
</gene>
<comment type="function">
    <text evidence="3">Putative solute transporter.</text>
</comment>
<comment type="subcellular location">
    <subcellularLocation>
        <location evidence="3">Membrane</location>
        <topology evidence="3">Multi-pass membrane protein</topology>
    </subcellularLocation>
</comment>
<comment type="similarity">
    <text evidence="3">Belongs to the SLC35F solute transporter family.</text>
</comment>
<reference key="1">
    <citation type="journal article" date="2005" name="Science">
        <title>The transcriptional landscape of the mammalian genome.</title>
        <authorList>
            <person name="Carninci P."/>
            <person name="Kasukawa T."/>
            <person name="Katayama S."/>
            <person name="Gough J."/>
            <person name="Frith M.C."/>
            <person name="Maeda N."/>
            <person name="Oyama R."/>
            <person name="Ravasi T."/>
            <person name="Lenhard B."/>
            <person name="Wells C."/>
            <person name="Kodzius R."/>
            <person name="Shimokawa K."/>
            <person name="Bajic V.B."/>
            <person name="Brenner S.E."/>
            <person name="Batalov S."/>
            <person name="Forrest A.R."/>
            <person name="Zavolan M."/>
            <person name="Davis M.J."/>
            <person name="Wilming L.G."/>
            <person name="Aidinis V."/>
            <person name="Allen J.E."/>
            <person name="Ambesi-Impiombato A."/>
            <person name="Apweiler R."/>
            <person name="Aturaliya R.N."/>
            <person name="Bailey T.L."/>
            <person name="Bansal M."/>
            <person name="Baxter L."/>
            <person name="Beisel K.W."/>
            <person name="Bersano T."/>
            <person name="Bono H."/>
            <person name="Chalk A.M."/>
            <person name="Chiu K.P."/>
            <person name="Choudhary V."/>
            <person name="Christoffels A."/>
            <person name="Clutterbuck D.R."/>
            <person name="Crowe M.L."/>
            <person name="Dalla E."/>
            <person name="Dalrymple B.P."/>
            <person name="de Bono B."/>
            <person name="Della Gatta G."/>
            <person name="di Bernardo D."/>
            <person name="Down T."/>
            <person name="Engstrom P."/>
            <person name="Fagiolini M."/>
            <person name="Faulkner G."/>
            <person name="Fletcher C.F."/>
            <person name="Fukushima T."/>
            <person name="Furuno M."/>
            <person name="Futaki S."/>
            <person name="Gariboldi M."/>
            <person name="Georgii-Hemming P."/>
            <person name="Gingeras T.R."/>
            <person name="Gojobori T."/>
            <person name="Green R.E."/>
            <person name="Gustincich S."/>
            <person name="Harbers M."/>
            <person name="Hayashi Y."/>
            <person name="Hensch T.K."/>
            <person name="Hirokawa N."/>
            <person name="Hill D."/>
            <person name="Huminiecki L."/>
            <person name="Iacono M."/>
            <person name="Ikeo K."/>
            <person name="Iwama A."/>
            <person name="Ishikawa T."/>
            <person name="Jakt M."/>
            <person name="Kanapin A."/>
            <person name="Katoh M."/>
            <person name="Kawasawa Y."/>
            <person name="Kelso J."/>
            <person name="Kitamura H."/>
            <person name="Kitano H."/>
            <person name="Kollias G."/>
            <person name="Krishnan S.P."/>
            <person name="Kruger A."/>
            <person name="Kummerfeld S.K."/>
            <person name="Kurochkin I.V."/>
            <person name="Lareau L.F."/>
            <person name="Lazarevic D."/>
            <person name="Lipovich L."/>
            <person name="Liu J."/>
            <person name="Liuni S."/>
            <person name="McWilliam S."/>
            <person name="Madan Babu M."/>
            <person name="Madera M."/>
            <person name="Marchionni L."/>
            <person name="Matsuda H."/>
            <person name="Matsuzawa S."/>
            <person name="Miki H."/>
            <person name="Mignone F."/>
            <person name="Miyake S."/>
            <person name="Morris K."/>
            <person name="Mottagui-Tabar S."/>
            <person name="Mulder N."/>
            <person name="Nakano N."/>
            <person name="Nakauchi H."/>
            <person name="Ng P."/>
            <person name="Nilsson R."/>
            <person name="Nishiguchi S."/>
            <person name="Nishikawa S."/>
            <person name="Nori F."/>
            <person name="Ohara O."/>
            <person name="Okazaki Y."/>
            <person name="Orlando V."/>
            <person name="Pang K.C."/>
            <person name="Pavan W.J."/>
            <person name="Pavesi G."/>
            <person name="Pesole G."/>
            <person name="Petrovsky N."/>
            <person name="Piazza S."/>
            <person name="Reed J."/>
            <person name="Reid J.F."/>
            <person name="Ring B.Z."/>
            <person name="Ringwald M."/>
            <person name="Rost B."/>
            <person name="Ruan Y."/>
            <person name="Salzberg S.L."/>
            <person name="Sandelin A."/>
            <person name="Schneider C."/>
            <person name="Schoenbach C."/>
            <person name="Sekiguchi K."/>
            <person name="Semple C.A."/>
            <person name="Seno S."/>
            <person name="Sessa L."/>
            <person name="Sheng Y."/>
            <person name="Shibata Y."/>
            <person name="Shimada H."/>
            <person name="Shimada K."/>
            <person name="Silva D."/>
            <person name="Sinclair B."/>
            <person name="Sperling S."/>
            <person name="Stupka E."/>
            <person name="Sugiura K."/>
            <person name="Sultana R."/>
            <person name="Takenaka Y."/>
            <person name="Taki K."/>
            <person name="Tammoja K."/>
            <person name="Tan S.L."/>
            <person name="Tang S."/>
            <person name="Taylor M.S."/>
            <person name="Tegner J."/>
            <person name="Teichmann S.A."/>
            <person name="Ueda H.R."/>
            <person name="van Nimwegen E."/>
            <person name="Verardo R."/>
            <person name="Wei C.L."/>
            <person name="Yagi K."/>
            <person name="Yamanishi H."/>
            <person name="Zabarovsky E."/>
            <person name="Zhu S."/>
            <person name="Zimmer A."/>
            <person name="Hide W."/>
            <person name="Bult C."/>
            <person name="Grimmond S.M."/>
            <person name="Teasdale R.D."/>
            <person name="Liu E.T."/>
            <person name="Brusic V."/>
            <person name="Quackenbush J."/>
            <person name="Wahlestedt C."/>
            <person name="Mattick J.S."/>
            <person name="Hume D.A."/>
            <person name="Kai C."/>
            <person name="Sasaki D."/>
            <person name="Tomaru Y."/>
            <person name="Fukuda S."/>
            <person name="Kanamori-Katayama M."/>
            <person name="Suzuki M."/>
            <person name="Aoki J."/>
            <person name="Arakawa T."/>
            <person name="Iida J."/>
            <person name="Imamura K."/>
            <person name="Itoh M."/>
            <person name="Kato T."/>
            <person name="Kawaji H."/>
            <person name="Kawagashira N."/>
            <person name="Kawashima T."/>
            <person name="Kojima M."/>
            <person name="Kondo S."/>
            <person name="Konno H."/>
            <person name="Nakano K."/>
            <person name="Ninomiya N."/>
            <person name="Nishio T."/>
            <person name="Okada M."/>
            <person name="Plessy C."/>
            <person name="Shibata K."/>
            <person name="Shiraki T."/>
            <person name="Suzuki S."/>
            <person name="Tagami M."/>
            <person name="Waki K."/>
            <person name="Watahiki A."/>
            <person name="Okamura-Oho Y."/>
            <person name="Suzuki H."/>
            <person name="Kawai J."/>
            <person name="Hayashizaki Y."/>
        </authorList>
    </citation>
    <scope>NUCLEOTIDE SEQUENCE [LARGE SCALE MRNA]</scope>
    <source>
        <strain>C57BL/6J</strain>
        <strain>NOD</strain>
        <tissue>Amnion</tissue>
        <tissue>Liver</tissue>
        <tissue>Placenta</tissue>
        <tissue>Spleen</tissue>
    </source>
</reference>
<reference key="2">
    <citation type="journal article" date="2004" name="Genome Res.">
        <title>The status, quality, and expansion of the NIH full-length cDNA project: the Mammalian Gene Collection (MGC).</title>
        <authorList>
            <consortium name="The MGC Project Team"/>
        </authorList>
    </citation>
    <scope>NUCLEOTIDE SEQUENCE [LARGE SCALE MRNA]</scope>
    <source>
        <strain>Czech II</strain>
        <tissue>Mammary tumor</tissue>
    </source>
</reference>
<proteinExistence type="evidence at transcript level"/>
<organism>
    <name type="scientific">Mus musculus</name>
    <name type="common">Mouse</name>
    <dbReference type="NCBI Taxonomy" id="10090"/>
    <lineage>
        <taxon>Eukaryota</taxon>
        <taxon>Metazoa</taxon>
        <taxon>Chordata</taxon>
        <taxon>Craniata</taxon>
        <taxon>Vertebrata</taxon>
        <taxon>Euteleostomi</taxon>
        <taxon>Mammalia</taxon>
        <taxon>Eutheria</taxon>
        <taxon>Euarchontoglires</taxon>
        <taxon>Glires</taxon>
        <taxon>Rodentia</taxon>
        <taxon>Myomorpha</taxon>
        <taxon>Muroidea</taxon>
        <taxon>Muridae</taxon>
        <taxon>Murinae</taxon>
        <taxon>Mus</taxon>
        <taxon>Mus</taxon>
    </lineage>
</organism>
<feature type="chain" id="PRO_0000311958" description="Solute carrier family 35 member F5">
    <location>
        <begin position="1"/>
        <end position="524"/>
    </location>
</feature>
<feature type="transmembrane region" description="Helical" evidence="2">
    <location>
        <begin position="69"/>
        <end position="89"/>
    </location>
</feature>
<feature type="transmembrane region" description="Helical" evidence="2">
    <location>
        <begin position="101"/>
        <end position="121"/>
    </location>
</feature>
<feature type="transmembrane region" description="Helical" evidence="2">
    <location>
        <begin position="244"/>
        <end position="264"/>
    </location>
</feature>
<feature type="transmembrane region" description="Helical" evidence="2">
    <location>
        <begin position="269"/>
        <end position="289"/>
    </location>
</feature>
<feature type="transmembrane region" description="Helical" evidence="2">
    <location>
        <begin position="297"/>
        <end position="317"/>
    </location>
</feature>
<feature type="transmembrane region" description="Helical" evidence="2">
    <location>
        <begin position="328"/>
        <end position="348"/>
    </location>
</feature>
<feature type="transmembrane region" description="Helical" evidence="2">
    <location>
        <begin position="362"/>
        <end position="382"/>
    </location>
</feature>
<feature type="transmembrane region" description="Helical" evidence="2">
    <location>
        <begin position="396"/>
        <end position="416"/>
    </location>
</feature>
<feature type="transmembrane region" description="Helical" evidence="2">
    <location>
        <begin position="421"/>
        <end position="441"/>
    </location>
</feature>
<feature type="transmembrane region" description="Helical" evidence="2">
    <location>
        <begin position="453"/>
        <end position="473"/>
    </location>
</feature>
<feature type="domain" description="EamA">
    <location>
        <begin position="253"/>
        <end position="317"/>
    </location>
</feature>
<feature type="modified residue" description="Phosphoserine" evidence="1">
    <location>
        <position position="207"/>
    </location>
</feature>
<feature type="sequence conflict" description="In Ref. 1; BAB23648." evidence="3" ref="1">
    <original>S</original>
    <variation>N</variation>
    <location>
        <position position="103"/>
    </location>
</feature>
<accession>Q8R314</accession>
<accession>Q9DBK9</accession>
<protein>
    <recommendedName>
        <fullName>Solute carrier family 35 member F5</fullName>
    </recommendedName>
</protein>
<sequence length="524" mass="58613">MVPPRLHRGAGRPGGLSSLPPFGLGSARFAGIAFEDLREALATRLQMVYVFIMNRVNSQSSGFSQRRRMALGIVILLLVDVIWVASSELTSYVFTQYNKPFFSTFAKTSMFVLYLLGFIIWKPWRQQCTRGFRGKPAAFFADAEGYFAACTTDTSMSSSLSEPLYVPVKFHDLPSEKLESTNIGTEKTPKKSRVRFSNIMEIRQLPSSHALEAKLSRMSYPTVKDQESILKTVGKLTATQVAKISFFFCFVWFLANLSYQEALSDTQVAIVNILSSTSGLFTLILAAVFPSNSGDRFTLSKLLAVILSIGGVVLVNLSGSEKSAGRDTIGSIWSLAGAMFYAVYIVMIKRKVDREDKLDIPMFFGFVGLFNLLLLWPGFFLLHYTGFEDFEFPNKVVLLCIIINGLIGTVLSEFLWLWGCFLTSSLIGTLALSLTIPLSIIADMCMQKVQFSWLFFAGAIPVFFSFFIVTLLCHYNNWDPVMVGVRRVFAFICRKHRIQRVPEDSEQCESLISMHSVSQEDGAT</sequence>
<dbReference type="EMBL" id="AK004892">
    <property type="protein sequence ID" value="BAB23648.1"/>
    <property type="molecule type" value="mRNA"/>
</dbReference>
<dbReference type="EMBL" id="AK145848">
    <property type="protein sequence ID" value="BAE26695.1"/>
    <property type="molecule type" value="mRNA"/>
</dbReference>
<dbReference type="EMBL" id="AK169012">
    <property type="protein sequence ID" value="BAE40809.1"/>
    <property type="molecule type" value="mRNA"/>
</dbReference>
<dbReference type="EMBL" id="AK171951">
    <property type="protein sequence ID" value="BAE42744.1"/>
    <property type="molecule type" value="mRNA"/>
</dbReference>
<dbReference type="EMBL" id="BC026858">
    <property type="protein sequence ID" value="AAH26858.1"/>
    <property type="molecule type" value="mRNA"/>
</dbReference>
<dbReference type="CCDS" id="CCDS35694.1"/>
<dbReference type="RefSeq" id="NP_083063.2">
    <property type="nucleotide sequence ID" value="NM_028787.5"/>
</dbReference>
<dbReference type="BioGRID" id="216528">
    <property type="interactions" value="1"/>
</dbReference>
<dbReference type="FunCoup" id="Q8R314">
    <property type="interactions" value="294"/>
</dbReference>
<dbReference type="STRING" id="10090.ENSMUSP00000027580"/>
<dbReference type="iPTMnet" id="Q8R314"/>
<dbReference type="PhosphoSitePlus" id="Q8R314"/>
<dbReference type="PaxDb" id="10090-ENSMUSP00000027580"/>
<dbReference type="ProteomicsDB" id="256563"/>
<dbReference type="Antibodypedia" id="33350">
    <property type="antibodies" value="81 antibodies from 20 providers"/>
</dbReference>
<dbReference type="DNASU" id="74150"/>
<dbReference type="Ensembl" id="ENSMUST00000027580.11">
    <property type="protein sequence ID" value="ENSMUSP00000027580.5"/>
    <property type="gene ID" value="ENSMUSG00000026342.11"/>
</dbReference>
<dbReference type="GeneID" id="74150"/>
<dbReference type="KEGG" id="mmu:74150"/>
<dbReference type="UCSC" id="uc007ckg.1">
    <property type="organism name" value="mouse"/>
</dbReference>
<dbReference type="AGR" id="MGI:1921400"/>
<dbReference type="CTD" id="80255"/>
<dbReference type="MGI" id="MGI:1921400">
    <property type="gene designation" value="Slc35f5"/>
</dbReference>
<dbReference type="VEuPathDB" id="HostDB:ENSMUSG00000026342"/>
<dbReference type="eggNOG" id="KOG2765">
    <property type="taxonomic scope" value="Eukaryota"/>
</dbReference>
<dbReference type="GeneTree" id="ENSGT00390000005949"/>
<dbReference type="HOGENOM" id="CLU_026578_2_1_1"/>
<dbReference type="InParanoid" id="Q8R314"/>
<dbReference type="OMA" id="MYGVYTI"/>
<dbReference type="OrthoDB" id="10041630at2759"/>
<dbReference type="PhylomeDB" id="Q8R314"/>
<dbReference type="TreeFam" id="TF314261"/>
<dbReference type="BioGRID-ORCS" id="74150">
    <property type="hits" value="4 hits in 76 CRISPR screens"/>
</dbReference>
<dbReference type="ChiTaRS" id="Slc35f5">
    <property type="organism name" value="mouse"/>
</dbReference>
<dbReference type="PRO" id="PR:Q8R314"/>
<dbReference type="Proteomes" id="UP000000589">
    <property type="component" value="Chromosome 1"/>
</dbReference>
<dbReference type="RNAct" id="Q8R314">
    <property type="molecule type" value="protein"/>
</dbReference>
<dbReference type="Bgee" id="ENSMUSG00000026342">
    <property type="expression patterns" value="Expressed in interventricular septum and 251 other cell types or tissues"/>
</dbReference>
<dbReference type="ExpressionAtlas" id="Q8R314">
    <property type="expression patterns" value="baseline and differential"/>
</dbReference>
<dbReference type="GO" id="GO:0016020">
    <property type="term" value="C:membrane"/>
    <property type="evidence" value="ECO:0007669"/>
    <property type="project" value="UniProtKB-SubCell"/>
</dbReference>
<dbReference type="InterPro" id="IPR000620">
    <property type="entry name" value="EamA_dom"/>
</dbReference>
<dbReference type="PANTHER" id="PTHR23051:SF0">
    <property type="entry name" value="SOLUTE CARRIER FAMILY 35 MEMBER F5"/>
    <property type="match status" value="1"/>
</dbReference>
<dbReference type="PANTHER" id="PTHR23051">
    <property type="entry name" value="SOLUTE CARRIER FAMILY 35, MEMBER F5"/>
    <property type="match status" value="1"/>
</dbReference>
<dbReference type="Pfam" id="PF00892">
    <property type="entry name" value="EamA"/>
    <property type="match status" value="1"/>
</dbReference>
<dbReference type="SUPFAM" id="SSF103481">
    <property type="entry name" value="Multidrug resistance efflux transporter EmrE"/>
    <property type="match status" value="1"/>
</dbReference>
<evidence type="ECO:0000250" key="1">
    <source>
        <dbReference type="UniProtKB" id="Q8WV83"/>
    </source>
</evidence>
<evidence type="ECO:0000255" key="2"/>
<evidence type="ECO:0000305" key="3"/>
<name>S35F5_MOUSE</name>